<name>Y6503_SACS2</name>
<sequence length="89" mass="9820">MSMPYDNEAKIKQAVILLQKIVNDTSVPRNIRRAATDAIRNLQDLGLSPAVRAANAIGILEDISQDPNMPTHARISIWNVVSILETVKD</sequence>
<proteinExistence type="inferred from homology"/>
<evidence type="ECO:0000305" key="1"/>
<organism>
    <name type="scientific">Saccharolobus solfataricus (strain ATCC 35092 / DSM 1617 / JCM 11322 / P2)</name>
    <name type="common">Sulfolobus solfataricus</name>
    <dbReference type="NCBI Taxonomy" id="273057"/>
    <lineage>
        <taxon>Archaea</taxon>
        <taxon>Thermoproteota</taxon>
        <taxon>Thermoprotei</taxon>
        <taxon>Sulfolobales</taxon>
        <taxon>Sulfolobaceae</taxon>
        <taxon>Saccharolobus</taxon>
    </lineage>
</organism>
<dbReference type="EMBL" id="Y18930">
    <property type="status" value="NOT_ANNOTATED_CDS"/>
    <property type="molecule type" value="Genomic_DNA"/>
</dbReference>
<dbReference type="EMBL" id="AE006641">
    <property type="protein sequence ID" value="AAK41079.1"/>
    <property type="molecule type" value="Genomic_DNA"/>
</dbReference>
<dbReference type="PIR" id="H90227">
    <property type="entry name" value="H90227"/>
</dbReference>
<dbReference type="RefSeq" id="WP_010923074.1">
    <property type="nucleotide sequence ID" value="NC_002754.1"/>
</dbReference>
<dbReference type="SMR" id="P58017"/>
<dbReference type="STRING" id="273057.SSO6503"/>
<dbReference type="PaxDb" id="273057-SSO6503"/>
<dbReference type="EnsemblBacteria" id="AAK41079">
    <property type="protein sequence ID" value="AAK41079"/>
    <property type="gene ID" value="SSO6503"/>
</dbReference>
<dbReference type="KEGG" id="sso:SSO6503"/>
<dbReference type="PATRIC" id="fig|273057.12.peg.783"/>
<dbReference type="eggNOG" id="arCOG04308">
    <property type="taxonomic scope" value="Archaea"/>
</dbReference>
<dbReference type="HOGENOM" id="CLU_165882_0_0_2"/>
<dbReference type="InParanoid" id="P58017"/>
<dbReference type="PhylomeDB" id="P58017"/>
<dbReference type="Proteomes" id="UP000001974">
    <property type="component" value="Chromosome"/>
</dbReference>
<dbReference type="Gene3D" id="1.20.1440.50">
    <property type="entry name" value="Ta0600-like"/>
    <property type="match status" value="1"/>
</dbReference>
<dbReference type="HAMAP" id="MF_00342">
    <property type="entry name" value="UPF0147"/>
    <property type="match status" value="1"/>
</dbReference>
<dbReference type="InterPro" id="IPR023130">
    <property type="entry name" value="Ta0600-like_sf"/>
</dbReference>
<dbReference type="InterPro" id="IPR005354">
    <property type="entry name" value="UPF0147"/>
</dbReference>
<dbReference type="NCBIfam" id="NF003319">
    <property type="entry name" value="PRK04330.1"/>
    <property type="match status" value="1"/>
</dbReference>
<dbReference type="Pfam" id="PF03685">
    <property type="entry name" value="UPF0147"/>
    <property type="match status" value="1"/>
</dbReference>
<dbReference type="SUPFAM" id="SSF158436">
    <property type="entry name" value="Ta0600-like"/>
    <property type="match status" value="1"/>
</dbReference>
<feature type="chain" id="PRO_0000150917" description="UPF0147 protein SSO6503">
    <location>
        <begin position="1"/>
        <end position="89"/>
    </location>
</feature>
<keyword id="KW-1185">Reference proteome</keyword>
<accession>P58017</accession>
<comment type="similarity">
    <text evidence="1">Belongs to the UPF0147 family.</text>
</comment>
<reference key="1">
    <citation type="journal article" date="2000" name="Genome">
        <title>Gene content and organization of a 281-kbp contig from the genome of the extremely thermophilic archaeon, Sulfolobus solfataricus P2.</title>
        <authorList>
            <person name="Charlebois R.L."/>
            <person name="Singh R.K."/>
            <person name="Chan-Weiher C.C.-Y."/>
            <person name="Allard G."/>
            <person name="Chow C."/>
            <person name="Confalonieri F."/>
            <person name="Curtis B."/>
            <person name="Duguet M."/>
            <person name="Erauso G."/>
            <person name="Faguy D."/>
            <person name="Gaasterland T."/>
            <person name="Garrett R.A."/>
            <person name="Gordon P."/>
            <person name="Jeffries A.C."/>
            <person name="Kozera C."/>
            <person name="Kushwaha N."/>
            <person name="Lafleur E."/>
            <person name="Medina N."/>
            <person name="Peng X."/>
            <person name="Penny S.L."/>
            <person name="She Q."/>
            <person name="St Jean A."/>
            <person name="van der Oost J."/>
            <person name="Young F."/>
            <person name="Zivanovic Y."/>
            <person name="Doolittle W.F."/>
            <person name="Ragan M.A."/>
            <person name="Sensen C.W."/>
        </authorList>
    </citation>
    <scope>NUCLEOTIDE SEQUENCE [LARGE SCALE GENOMIC DNA]</scope>
    <source>
        <strain>ATCC 35092 / DSM 1617 / JCM 11322 / P2</strain>
    </source>
</reference>
<reference key="2">
    <citation type="journal article" date="2001" name="Proc. Natl. Acad. Sci. U.S.A.">
        <title>The complete genome of the crenarchaeon Sulfolobus solfataricus P2.</title>
        <authorList>
            <person name="She Q."/>
            <person name="Singh R.K."/>
            <person name="Confalonieri F."/>
            <person name="Zivanovic Y."/>
            <person name="Allard G."/>
            <person name="Awayez M.J."/>
            <person name="Chan-Weiher C.C.-Y."/>
            <person name="Clausen I.G."/>
            <person name="Curtis B.A."/>
            <person name="De Moors A."/>
            <person name="Erauso G."/>
            <person name="Fletcher C."/>
            <person name="Gordon P.M.K."/>
            <person name="Heikamp-de Jong I."/>
            <person name="Jeffries A.C."/>
            <person name="Kozera C.J."/>
            <person name="Medina N."/>
            <person name="Peng X."/>
            <person name="Thi-Ngoc H.P."/>
            <person name="Redder P."/>
            <person name="Schenk M.E."/>
            <person name="Theriault C."/>
            <person name="Tolstrup N."/>
            <person name="Charlebois R.L."/>
            <person name="Doolittle W.F."/>
            <person name="Duguet M."/>
            <person name="Gaasterland T."/>
            <person name="Garrett R.A."/>
            <person name="Ragan M.A."/>
            <person name="Sensen C.W."/>
            <person name="Van der Oost J."/>
        </authorList>
    </citation>
    <scope>NUCLEOTIDE SEQUENCE [LARGE SCALE GENOMIC DNA]</scope>
    <source>
        <strain>ATCC 35092 / DSM 1617 / JCM 11322 / P2</strain>
    </source>
</reference>
<protein>
    <recommendedName>
        <fullName>UPF0147 protein SSO6503</fullName>
    </recommendedName>
</protein>
<gene>
    <name type="ordered locus">SSO6503</name>
    <name type="ORF">C40_017.1</name>
</gene>